<name>SPAK_SALTI</name>
<gene>
    <name type="primary">spaK</name>
    <name type="synonym">invB</name>
    <name type="ordered locus">STY3018</name>
    <name type="ordered locus">t2797</name>
</gene>
<sequence length="135" mass="14919">MQHLDIAELVRSALEVSGCDPSLIGGIDSHSTIVLDLFALPSICISVKDDDVWIWAQLGADSMVVLQQRAYEILMTIMEGCHFARGGQLLLGEQNGELTLKALVHPDFLSDGEKFSTALNGFYNYLEVFSRSLMR</sequence>
<proteinExistence type="inferred from homology"/>
<accession>P0A1N1</accession>
<accession>P39443</accession>
<keyword id="KW-0843">Virulence</keyword>
<dbReference type="EMBL" id="AL513382">
    <property type="protein sequence ID" value="CAD06002.1"/>
    <property type="molecule type" value="Genomic_DNA"/>
</dbReference>
<dbReference type="EMBL" id="AE014613">
    <property type="protein sequence ID" value="AAO70358.1"/>
    <property type="molecule type" value="Genomic_DNA"/>
</dbReference>
<dbReference type="RefSeq" id="NP_457289.1">
    <property type="nucleotide sequence ID" value="NC_003198.1"/>
</dbReference>
<dbReference type="RefSeq" id="WP_001164066.1">
    <property type="nucleotide sequence ID" value="NZ_WSUR01000005.1"/>
</dbReference>
<dbReference type="SMR" id="P0A1N1"/>
<dbReference type="STRING" id="220341.gene:17586912"/>
<dbReference type="KEGG" id="stt:t2797"/>
<dbReference type="KEGG" id="sty:STY3018"/>
<dbReference type="PATRIC" id="fig|220341.7.peg.3072"/>
<dbReference type="eggNOG" id="ENOG5032TGU">
    <property type="taxonomic scope" value="Bacteria"/>
</dbReference>
<dbReference type="HOGENOM" id="CLU_125441_1_0_6"/>
<dbReference type="OMA" id="TIMEGCQ"/>
<dbReference type="OrthoDB" id="8588812at2"/>
<dbReference type="Proteomes" id="UP000000541">
    <property type="component" value="Chromosome"/>
</dbReference>
<dbReference type="Proteomes" id="UP000002670">
    <property type="component" value="Chromosome"/>
</dbReference>
<dbReference type="CDD" id="cd17035">
    <property type="entry name" value="T3SC_IB_Spa15-like"/>
    <property type="match status" value="1"/>
</dbReference>
<dbReference type="Gene3D" id="3.30.1460.10">
    <property type="match status" value="1"/>
</dbReference>
<dbReference type="InterPro" id="IPR003065">
    <property type="entry name" value="Invas_SpaK"/>
</dbReference>
<dbReference type="NCBIfam" id="NF011864">
    <property type="entry name" value="PRK15336.1"/>
    <property type="match status" value="1"/>
</dbReference>
<dbReference type="Pfam" id="PF03519">
    <property type="entry name" value="Invas_SpaK"/>
    <property type="match status" value="1"/>
</dbReference>
<dbReference type="PRINTS" id="PR01305">
    <property type="entry name" value="SSPAKPROTEIN"/>
</dbReference>
<dbReference type="SUPFAM" id="SSF69635">
    <property type="entry name" value="Type III secretory system chaperone-like"/>
    <property type="match status" value="1"/>
</dbReference>
<protein>
    <recommendedName>
        <fullName>Surface presentation of antigens protein SpaK</fullName>
    </recommendedName>
    <alternativeName>
        <fullName>Invasion protein InvB</fullName>
    </alternativeName>
</protein>
<organism>
    <name type="scientific">Salmonella typhi</name>
    <dbReference type="NCBI Taxonomy" id="90370"/>
    <lineage>
        <taxon>Bacteria</taxon>
        <taxon>Pseudomonadati</taxon>
        <taxon>Pseudomonadota</taxon>
        <taxon>Gammaproteobacteria</taxon>
        <taxon>Enterobacterales</taxon>
        <taxon>Enterobacteriaceae</taxon>
        <taxon>Salmonella</taxon>
    </lineage>
</organism>
<comment type="function">
    <text evidence="1">Involved in a secretory pathway responsible for the surface presentation of determinants needed for the entry of Salmonella species into mammalian cells.</text>
</comment>
<comment type="similarity">
    <text evidence="2">Belongs to the SpaK family.</text>
</comment>
<reference key="1">
    <citation type="journal article" date="2001" name="Nature">
        <title>Complete genome sequence of a multiple drug resistant Salmonella enterica serovar Typhi CT18.</title>
        <authorList>
            <person name="Parkhill J."/>
            <person name="Dougan G."/>
            <person name="James K.D."/>
            <person name="Thomson N.R."/>
            <person name="Pickard D."/>
            <person name="Wain J."/>
            <person name="Churcher C.M."/>
            <person name="Mungall K.L."/>
            <person name="Bentley S.D."/>
            <person name="Holden M.T.G."/>
            <person name="Sebaihia M."/>
            <person name="Baker S."/>
            <person name="Basham D."/>
            <person name="Brooks K."/>
            <person name="Chillingworth T."/>
            <person name="Connerton P."/>
            <person name="Cronin A."/>
            <person name="Davis P."/>
            <person name="Davies R.M."/>
            <person name="Dowd L."/>
            <person name="White N."/>
            <person name="Farrar J."/>
            <person name="Feltwell T."/>
            <person name="Hamlin N."/>
            <person name="Haque A."/>
            <person name="Hien T.T."/>
            <person name="Holroyd S."/>
            <person name="Jagels K."/>
            <person name="Krogh A."/>
            <person name="Larsen T.S."/>
            <person name="Leather S."/>
            <person name="Moule S."/>
            <person name="O'Gaora P."/>
            <person name="Parry C."/>
            <person name="Quail M.A."/>
            <person name="Rutherford K.M."/>
            <person name="Simmonds M."/>
            <person name="Skelton J."/>
            <person name="Stevens K."/>
            <person name="Whitehead S."/>
            <person name="Barrell B.G."/>
        </authorList>
    </citation>
    <scope>NUCLEOTIDE SEQUENCE [LARGE SCALE GENOMIC DNA]</scope>
    <source>
        <strain>CT18</strain>
    </source>
</reference>
<reference key="2">
    <citation type="journal article" date="2003" name="J. Bacteriol.">
        <title>Comparative genomics of Salmonella enterica serovar Typhi strains Ty2 and CT18.</title>
        <authorList>
            <person name="Deng W."/>
            <person name="Liou S.-R."/>
            <person name="Plunkett G. III"/>
            <person name="Mayhew G.F."/>
            <person name="Rose D.J."/>
            <person name="Burland V."/>
            <person name="Kodoyianni V."/>
            <person name="Schwartz D.C."/>
            <person name="Blattner F.R."/>
        </authorList>
    </citation>
    <scope>NUCLEOTIDE SEQUENCE [LARGE SCALE GENOMIC DNA]</scope>
    <source>
        <strain>ATCC 700931 / Ty2</strain>
    </source>
</reference>
<feature type="chain" id="PRO_0000180964" description="Surface presentation of antigens protein SpaK">
    <location>
        <begin position="1"/>
        <end position="135"/>
    </location>
</feature>
<evidence type="ECO:0000250" key="1"/>
<evidence type="ECO:0000305" key="2"/>